<evidence type="ECO:0000255" key="1">
    <source>
        <dbReference type="HAMAP-Rule" id="MF_00381"/>
    </source>
</evidence>
<name>IHFB_ERWT9</name>
<proteinExistence type="inferred from homology"/>
<comment type="function">
    <text evidence="1">This protein is one of the two subunits of integration host factor, a specific DNA-binding protein that functions in genetic recombination as well as in transcriptional and translational control.</text>
</comment>
<comment type="subunit">
    <text evidence="1">Heterodimer of an alpha and a beta chain.</text>
</comment>
<comment type="similarity">
    <text evidence="1">Belongs to the bacterial histone-like protein family.</text>
</comment>
<organism>
    <name type="scientific">Erwinia tasmaniensis (strain DSM 17950 / CFBP 7177 / CIP 109463 / NCPPB 4357 / Et1/99)</name>
    <dbReference type="NCBI Taxonomy" id="465817"/>
    <lineage>
        <taxon>Bacteria</taxon>
        <taxon>Pseudomonadati</taxon>
        <taxon>Pseudomonadota</taxon>
        <taxon>Gammaproteobacteria</taxon>
        <taxon>Enterobacterales</taxon>
        <taxon>Erwiniaceae</taxon>
        <taxon>Erwinia</taxon>
    </lineage>
</organism>
<sequence length="95" mass="10693">MTKSELIERLAGQQSHIPAKVVEDAVKEMLEHMATTLSEGERIEIRGFGSFSLHYRAPRTGRNPKTGDKVELEGKYVPHFKPGKELRDRANIYGG</sequence>
<feature type="chain" id="PRO_1000122217" description="Integration host factor subunit beta">
    <location>
        <begin position="1"/>
        <end position="95"/>
    </location>
</feature>
<keyword id="KW-0233">DNA recombination</keyword>
<keyword id="KW-0238">DNA-binding</keyword>
<keyword id="KW-1185">Reference proteome</keyword>
<keyword id="KW-0804">Transcription</keyword>
<keyword id="KW-0805">Transcription regulation</keyword>
<keyword id="KW-0810">Translation regulation</keyword>
<accession>B2VC76</accession>
<protein>
    <recommendedName>
        <fullName evidence="1">Integration host factor subunit beta</fullName>
        <shortName evidence="1">IHF-beta</shortName>
    </recommendedName>
</protein>
<reference key="1">
    <citation type="journal article" date="2008" name="Environ. Microbiol.">
        <title>The genome of Erwinia tasmaniensis strain Et1/99, a non-pathogenic bacterium in the genus Erwinia.</title>
        <authorList>
            <person name="Kube M."/>
            <person name="Migdoll A.M."/>
            <person name="Mueller I."/>
            <person name="Kuhl H."/>
            <person name="Beck A."/>
            <person name="Reinhardt R."/>
            <person name="Geider K."/>
        </authorList>
    </citation>
    <scope>NUCLEOTIDE SEQUENCE [LARGE SCALE GENOMIC DNA]</scope>
    <source>
        <strain>DSM 17950 / CFBP 7177 / CIP 109463 / NCPPB 4357 / Et1/99</strain>
    </source>
</reference>
<dbReference type="EMBL" id="CU468135">
    <property type="protein sequence ID" value="CAO97187.1"/>
    <property type="molecule type" value="Genomic_DNA"/>
</dbReference>
<dbReference type="RefSeq" id="WP_012441858.1">
    <property type="nucleotide sequence ID" value="NC_010694.1"/>
</dbReference>
<dbReference type="SMR" id="B2VC76"/>
<dbReference type="STRING" id="465817.ETA_21410"/>
<dbReference type="KEGG" id="eta:ETA_21410"/>
<dbReference type="eggNOG" id="COG0776">
    <property type="taxonomic scope" value="Bacteria"/>
</dbReference>
<dbReference type="HOGENOM" id="CLU_105066_2_0_6"/>
<dbReference type="OrthoDB" id="9804203at2"/>
<dbReference type="Proteomes" id="UP000001726">
    <property type="component" value="Chromosome"/>
</dbReference>
<dbReference type="GO" id="GO:0005694">
    <property type="term" value="C:chromosome"/>
    <property type="evidence" value="ECO:0007669"/>
    <property type="project" value="InterPro"/>
</dbReference>
<dbReference type="GO" id="GO:0005829">
    <property type="term" value="C:cytosol"/>
    <property type="evidence" value="ECO:0007669"/>
    <property type="project" value="TreeGrafter"/>
</dbReference>
<dbReference type="GO" id="GO:0003677">
    <property type="term" value="F:DNA binding"/>
    <property type="evidence" value="ECO:0007669"/>
    <property type="project" value="UniProtKB-UniRule"/>
</dbReference>
<dbReference type="GO" id="GO:0030527">
    <property type="term" value="F:structural constituent of chromatin"/>
    <property type="evidence" value="ECO:0007669"/>
    <property type="project" value="InterPro"/>
</dbReference>
<dbReference type="GO" id="GO:0006310">
    <property type="term" value="P:DNA recombination"/>
    <property type="evidence" value="ECO:0007669"/>
    <property type="project" value="UniProtKB-UniRule"/>
</dbReference>
<dbReference type="GO" id="GO:0006355">
    <property type="term" value="P:regulation of DNA-templated transcription"/>
    <property type="evidence" value="ECO:0007669"/>
    <property type="project" value="UniProtKB-UniRule"/>
</dbReference>
<dbReference type="GO" id="GO:0006417">
    <property type="term" value="P:regulation of translation"/>
    <property type="evidence" value="ECO:0007669"/>
    <property type="project" value="UniProtKB-UniRule"/>
</dbReference>
<dbReference type="CDD" id="cd13836">
    <property type="entry name" value="IHF_B"/>
    <property type="match status" value="1"/>
</dbReference>
<dbReference type="FunFam" id="4.10.520.10:FF:000003">
    <property type="entry name" value="Integration host factor subunit beta"/>
    <property type="match status" value="1"/>
</dbReference>
<dbReference type="Gene3D" id="4.10.520.10">
    <property type="entry name" value="IHF-like DNA-binding proteins"/>
    <property type="match status" value="1"/>
</dbReference>
<dbReference type="HAMAP" id="MF_00381">
    <property type="entry name" value="IHF_beta"/>
    <property type="match status" value="1"/>
</dbReference>
<dbReference type="InterPro" id="IPR000119">
    <property type="entry name" value="Hist_DNA-bd"/>
</dbReference>
<dbReference type="InterPro" id="IPR020816">
    <property type="entry name" value="Histone-like_DNA-bd_CS"/>
</dbReference>
<dbReference type="InterPro" id="IPR010992">
    <property type="entry name" value="IHF-like_DNA-bd_dom_sf"/>
</dbReference>
<dbReference type="InterPro" id="IPR005685">
    <property type="entry name" value="IHF_beta"/>
</dbReference>
<dbReference type="NCBIfam" id="TIGR00988">
    <property type="entry name" value="hip"/>
    <property type="match status" value="1"/>
</dbReference>
<dbReference type="NCBIfam" id="NF001222">
    <property type="entry name" value="PRK00199.1"/>
    <property type="match status" value="1"/>
</dbReference>
<dbReference type="PANTHER" id="PTHR33175">
    <property type="entry name" value="DNA-BINDING PROTEIN HU"/>
    <property type="match status" value="1"/>
</dbReference>
<dbReference type="PANTHER" id="PTHR33175:SF5">
    <property type="entry name" value="INTEGRATION HOST FACTOR SUBUNIT BETA"/>
    <property type="match status" value="1"/>
</dbReference>
<dbReference type="Pfam" id="PF00216">
    <property type="entry name" value="Bac_DNA_binding"/>
    <property type="match status" value="1"/>
</dbReference>
<dbReference type="PRINTS" id="PR01727">
    <property type="entry name" value="DNABINDINGHU"/>
</dbReference>
<dbReference type="SMART" id="SM00411">
    <property type="entry name" value="BHL"/>
    <property type="match status" value="1"/>
</dbReference>
<dbReference type="SUPFAM" id="SSF47729">
    <property type="entry name" value="IHF-like DNA-binding proteins"/>
    <property type="match status" value="1"/>
</dbReference>
<dbReference type="PROSITE" id="PS00045">
    <property type="entry name" value="HISTONE_LIKE"/>
    <property type="match status" value="1"/>
</dbReference>
<gene>
    <name evidence="1" type="primary">ihfB</name>
    <name evidence="1" type="synonym">himD</name>
    <name type="ordered locus">ETA_21410</name>
</gene>